<gene>
    <name evidence="4" type="primary">TPS5FN</name>
    <name evidence="6" type="ORF">F8388_001483</name>
    <name evidence="7" type="ORF">G4B88_022052</name>
</gene>
<evidence type="ECO:0000250" key="1">
    <source>
        <dbReference type="UniProtKB" id="A0A1C9J6A7"/>
    </source>
</evidence>
<evidence type="ECO:0000250" key="2">
    <source>
        <dbReference type="UniProtKB" id="Q40577"/>
    </source>
</evidence>
<evidence type="ECO:0000269" key="3">
    <source>
    </source>
</evidence>
<evidence type="ECO:0000303" key="4">
    <source>
    </source>
</evidence>
<evidence type="ECO:0000305" key="5"/>
<evidence type="ECO:0000312" key="6">
    <source>
        <dbReference type="EMBL" id="KAF4359439.1"/>
    </source>
</evidence>
<evidence type="ECO:0000312" key="7">
    <source>
        <dbReference type="EMBL" id="KAF4366759.1"/>
    </source>
</evidence>
<proteinExistence type="evidence at protein level"/>
<protein>
    <recommendedName>
        <fullName evidence="4">Myrcene synthase TPS5FN</fullName>
        <ecNumber evidence="3">4.2.3.15</ecNumber>
    </recommendedName>
    <alternativeName>
        <fullName evidence="4">(+)-alpha-pinene synthase TPS5FN</fullName>
        <ecNumber evidence="3">4.2.3.121</ecNumber>
    </alternativeName>
    <alternativeName>
        <fullName evidence="4">(-)-limonene synthase TPS5FN</fullName>
        <shortName evidence="4">(-)-(4S)-limonene synthase</shortName>
        <ecNumber evidence="3">4.2.3.16</ecNumber>
    </alternativeName>
    <alternativeName>
        <fullName evidence="4">Camphene synthase TPS5FN</fullName>
        <ecNumber evidence="3">4.2.3.-</ecNumber>
    </alternativeName>
    <alternativeName>
        <fullName evidence="4">Sabinene synthase TPS5FN</fullName>
        <ecNumber evidence="3">4.2.3.-</ecNumber>
    </alternativeName>
    <alternativeName>
        <fullName evidence="4">Terpene synthase 5FN</fullName>
        <shortName evidence="4">CsTPS5FN</shortName>
    </alternativeName>
    <alternativeName>
        <fullName evidence="4">Terpinolene synthase TPS1</fullName>
        <ecNumber evidence="3">4.2.3.113</ecNumber>
    </alternativeName>
</protein>
<organism>
    <name type="scientific">Cannabis sativa</name>
    <name type="common">Hemp</name>
    <name type="synonym">Marijuana</name>
    <dbReference type="NCBI Taxonomy" id="3483"/>
    <lineage>
        <taxon>Eukaryota</taxon>
        <taxon>Viridiplantae</taxon>
        <taxon>Streptophyta</taxon>
        <taxon>Embryophyta</taxon>
        <taxon>Tracheophyta</taxon>
        <taxon>Spermatophyta</taxon>
        <taxon>Magnoliopsida</taxon>
        <taxon>eudicotyledons</taxon>
        <taxon>Gunneridae</taxon>
        <taxon>Pentapetalae</taxon>
        <taxon>rosids</taxon>
        <taxon>fabids</taxon>
        <taxon>Rosales</taxon>
        <taxon>Cannabaceae</taxon>
        <taxon>Cannabis</taxon>
    </lineage>
</organism>
<feature type="chain" id="PRO_0000460899" description="Myrcene synthase TPS5FN">
    <location>
        <begin position="1"/>
        <end position="573"/>
    </location>
</feature>
<feature type="short sequence motif" description="DDXXD motif" evidence="2">
    <location>
        <begin position="323"/>
        <end position="327"/>
    </location>
</feature>
<feature type="binding site" evidence="2">
    <location>
        <position position="286"/>
    </location>
    <ligand>
        <name>(2E)-geranyl diphosphate</name>
        <dbReference type="ChEBI" id="CHEBI:58057"/>
    </ligand>
</feature>
<feature type="binding site" evidence="2">
    <location>
        <position position="323"/>
    </location>
    <ligand>
        <name>(2E)-geranyl diphosphate</name>
        <dbReference type="ChEBI" id="CHEBI:58057"/>
    </ligand>
</feature>
<feature type="binding site" evidence="2">
    <location>
        <position position="323"/>
    </location>
    <ligand>
        <name>Mg(2+)</name>
        <dbReference type="ChEBI" id="CHEBI:18420"/>
        <label>1</label>
    </ligand>
</feature>
<feature type="binding site" evidence="2">
    <location>
        <position position="323"/>
    </location>
    <ligand>
        <name>Mg(2+)</name>
        <dbReference type="ChEBI" id="CHEBI:18420"/>
        <label>2</label>
    </ligand>
</feature>
<feature type="binding site" evidence="2">
    <location>
        <position position="327"/>
    </location>
    <ligand>
        <name>(2E)-geranyl diphosphate</name>
        <dbReference type="ChEBI" id="CHEBI:58057"/>
    </ligand>
</feature>
<feature type="binding site" evidence="2">
    <location>
        <position position="327"/>
    </location>
    <ligand>
        <name>Mg(2+)</name>
        <dbReference type="ChEBI" id="CHEBI:18420"/>
        <label>1</label>
    </ligand>
</feature>
<feature type="binding site" evidence="2">
    <location>
        <position position="327"/>
    </location>
    <ligand>
        <name>Mg(2+)</name>
        <dbReference type="ChEBI" id="CHEBI:18420"/>
        <label>2</label>
    </ligand>
</feature>
<feature type="binding site" evidence="2">
    <location>
        <position position="464"/>
    </location>
    <ligand>
        <name>(2E)-geranyl diphosphate</name>
        <dbReference type="ChEBI" id="CHEBI:58057"/>
    </ligand>
</feature>
<feature type="binding site" evidence="2">
    <location>
        <position position="467"/>
    </location>
    <ligand>
        <name>(2E)-geranyl diphosphate</name>
        <dbReference type="ChEBI" id="CHEBI:58057"/>
    </ligand>
</feature>
<feature type="binding site" evidence="2">
    <location>
        <position position="467"/>
    </location>
    <ligand>
        <name>Mg(2+)</name>
        <dbReference type="ChEBI" id="CHEBI:18420"/>
        <label>3</label>
    </ligand>
</feature>
<feature type="binding site" evidence="2">
    <location>
        <position position="471"/>
    </location>
    <ligand>
        <name>Mg(2+)</name>
        <dbReference type="ChEBI" id="CHEBI:18420"/>
        <label>3</label>
    </ligand>
</feature>
<feature type="binding site" evidence="2">
    <location>
        <position position="475"/>
    </location>
    <ligand>
        <name>Mg(2+)</name>
        <dbReference type="ChEBI" id="CHEBI:18420"/>
        <label>3</label>
    </ligand>
</feature>
<feature type="sequence conflict" description="In Ref. 1; ARE72256." evidence="5" ref="1">
    <original>I</original>
    <variation>F</variation>
    <location>
        <position position="555"/>
    </location>
</feature>
<accession>A0A1V0QSG0</accession>
<accession>A0A7J6ENY2</accession>
<comment type="function">
    <text evidence="3">Involved in monoterpene (C10) olefins biosynthesis, constituants of cannabinoids and terpenoids-rich resins (PubMed:28355238). Catalyzes mainly the conversion of (2E)-geranyl diphosphate to beta-myrcene, and also produces minor products such as alpha-pinene, camphene, sabinene, limonene and terpinolene (PubMed:28355238).</text>
</comment>
<comment type="catalytic activity">
    <reaction evidence="3">
        <text>(2E)-geranyl diphosphate = beta-myrcene + diphosphate</text>
        <dbReference type="Rhea" id="RHEA:16965"/>
        <dbReference type="ChEBI" id="CHEBI:17221"/>
        <dbReference type="ChEBI" id="CHEBI:33019"/>
        <dbReference type="ChEBI" id="CHEBI:58057"/>
        <dbReference type="EC" id="4.2.3.15"/>
    </reaction>
    <physiologicalReaction direction="left-to-right" evidence="3">
        <dbReference type="Rhea" id="RHEA:16966"/>
    </physiologicalReaction>
</comment>
<comment type="catalytic activity">
    <reaction evidence="3">
        <text>(2E)-geranyl diphosphate = (1R,5R)-alpha-pinene + diphosphate</text>
        <dbReference type="Rhea" id="RHEA:32575"/>
        <dbReference type="ChEBI" id="CHEBI:28261"/>
        <dbReference type="ChEBI" id="CHEBI:33019"/>
        <dbReference type="ChEBI" id="CHEBI:58057"/>
        <dbReference type="EC" id="4.2.3.121"/>
    </reaction>
    <physiologicalReaction direction="left-to-right" evidence="3">
        <dbReference type="Rhea" id="RHEA:32576"/>
    </physiologicalReaction>
</comment>
<comment type="catalytic activity">
    <reaction evidence="3">
        <text>(2E)-geranyl diphosphate = sabinene + diphosphate</text>
        <dbReference type="Rhea" id="RHEA:68636"/>
        <dbReference type="ChEBI" id="CHEBI:33019"/>
        <dbReference type="ChEBI" id="CHEBI:50027"/>
        <dbReference type="ChEBI" id="CHEBI:58057"/>
    </reaction>
    <physiologicalReaction direction="left-to-right" evidence="3">
        <dbReference type="Rhea" id="RHEA:68637"/>
    </physiologicalReaction>
</comment>
<comment type="catalytic activity">
    <reaction evidence="3">
        <text>(2E)-geranyl diphosphate = (4S)-limonene + diphosphate</text>
        <dbReference type="Rhea" id="RHEA:12869"/>
        <dbReference type="ChEBI" id="CHEBI:15383"/>
        <dbReference type="ChEBI" id="CHEBI:33019"/>
        <dbReference type="ChEBI" id="CHEBI:58057"/>
        <dbReference type="EC" id="4.2.3.16"/>
    </reaction>
    <physiologicalReaction direction="left-to-right" evidence="3">
        <dbReference type="Rhea" id="RHEA:12870"/>
    </physiologicalReaction>
</comment>
<comment type="catalytic activity">
    <reaction evidence="3">
        <text>(2E)-geranyl diphosphate = terpinolene + diphosphate</text>
        <dbReference type="Rhea" id="RHEA:25500"/>
        <dbReference type="ChEBI" id="CHEBI:9457"/>
        <dbReference type="ChEBI" id="CHEBI:33019"/>
        <dbReference type="ChEBI" id="CHEBI:58057"/>
        <dbReference type="EC" id="4.2.3.113"/>
    </reaction>
    <physiologicalReaction direction="left-to-right" evidence="3">
        <dbReference type="Rhea" id="RHEA:25501"/>
    </physiologicalReaction>
</comment>
<comment type="catalytic activity">
    <reaction evidence="3">
        <text>(2E)-geranyl diphosphate = camphene + diphosphate</text>
        <dbReference type="Rhea" id="RHEA:80391"/>
        <dbReference type="ChEBI" id="CHEBI:3830"/>
        <dbReference type="ChEBI" id="CHEBI:33019"/>
        <dbReference type="ChEBI" id="CHEBI:58057"/>
    </reaction>
    <physiologicalReaction direction="left-to-right" evidence="3">
        <dbReference type="Rhea" id="RHEA:80392"/>
    </physiologicalReaction>
</comment>
<comment type="cofactor">
    <cofactor evidence="1">
        <name>Mg(2+)</name>
        <dbReference type="ChEBI" id="CHEBI:18420"/>
    </cofactor>
    <cofactor evidence="1">
        <name>Mn(2+)</name>
        <dbReference type="ChEBI" id="CHEBI:29035"/>
    </cofactor>
    <text evidence="1">Binds 3 Mg(2+) or Mn(2+) ions per subunit.</text>
</comment>
<comment type="pathway">
    <text evidence="3">Secondary metabolite biosynthesis; terpenoid biosynthesis.</text>
</comment>
<comment type="tissue specificity">
    <text evidence="3">Expressed in glandular trichomes two to four weeks after flowering onset.</text>
</comment>
<comment type="domain">
    <text evidence="2">The Asp-Asp-Xaa-Xaa-Asp/Glu (DDXXD/E) motif is important for the catalytic activity, presumably through binding to Mg(2+).</text>
</comment>
<comment type="similarity">
    <text evidence="5">Belongs to the terpene synthase family. Tpsb subfamily.</text>
</comment>
<comment type="sequence caution" evidence="5">
    <conflict type="erroneous gene model prediction"/>
</comment>
<comment type="sequence caution" evidence="5">
    <conflict type="erroneous gene model prediction"/>
</comment>
<dbReference type="EC" id="4.2.3.15" evidence="3"/>
<dbReference type="EC" id="4.2.3.121" evidence="3"/>
<dbReference type="EC" id="4.2.3.16" evidence="3"/>
<dbReference type="EC" id="4.2.3.-" evidence="3"/>
<dbReference type="EC" id="4.2.3.113" evidence="3"/>
<dbReference type="EMBL" id="KY014560">
    <property type="protein sequence ID" value="ARE72256.1"/>
    <property type="molecule type" value="mRNA"/>
</dbReference>
<dbReference type="EMBL" id="JAATIP010000215">
    <property type="protein sequence ID" value="KAF4359439.1"/>
    <property type="status" value="ALT_SEQ"/>
    <property type="molecule type" value="Genomic_DNA"/>
</dbReference>
<dbReference type="EMBL" id="JAATIQ010000253">
    <property type="protein sequence ID" value="KAF4366759.1"/>
    <property type="status" value="ALT_SEQ"/>
    <property type="molecule type" value="Genomic_DNA"/>
</dbReference>
<dbReference type="SMR" id="A0A1V0QSG0"/>
<dbReference type="UniPathway" id="UPA00213"/>
<dbReference type="Proteomes" id="UP000525078">
    <property type="component" value="Unassembled WGS sequence"/>
</dbReference>
<dbReference type="Proteomes" id="UP000583929">
    <property type="component" value="Unassembled WGS sequence"/>
</dbReference>
<dbReference type="Proteomes" id="UP000596661">
    <property type="component" value="Unplaced"/>
</dbReference>
<dbReference type="GO" id="GO:0000287">
    <property type="term" value="F:magnesium ion binding"/>
    <property type="evidence" value="ECO:0007669"/>
    <property type="project" value="InterPro"/>
</dbReference>
<dbReference type="GO" id="GO:0010333">
    <property type="term" value="F:terpene synthase activity"/>
    <property type="evidence" value="ECO:0007669"/>
    <property type="project" value="InterPro"/>
</dbReference>
<dbReference type="GO" id="GO:0016102">
    <property type="term" value="P:diterpenoid biosynthetic process"/>
    <property type="evidence" value="ECO:0007669"/>
    <property type="project" value="InterPro"/>
</dbReference>
<dbReference type="CDD" id="cd00684">
    <property type="entry name" value="Terpene_cyclase_plant_C1"/>
    <property type="match status" value="1"/>
</dbReference>
<dbReference type="FunFam" id="1.10.600.10:FF:000007">
    <property type="entry name" value="Isoprene synthase, chloroplastic"/>
    <property type="match status" value="1"/>
</dbReference>
<dbReference type="FunFam" id="1.50.10.130:FF:000001">
    <property type="entry name" value="Isoprene synthase, chloroplastic"/>
    <property type="match status" value="1"/>
</dbReference>
<dbReference type="Gene3D" id="1.10.600.10">
    <property type="entry name" value="Farnesyl Diphosphate Synthase"/>
    <property type="match status" value="1"/>
</dbReference>
<dbReference type="Gene3D" id="1.50.10.130">
    <property type="entry name" value="Terpene synthase, N-terminal domain"/>
    <property type="match status" value="1"/>
</dbReference>
<dbReference type="InterPro" id="IPR008949">
    <property type="entry name" value="Isoprenoid_synthase_dom_sf"/>
</dbReference>
<dbReference type="InterPro" id="IPR034741">
    <property type="entry name" value="Terpene_cyclase-like_1_C"/>
</dbReference>
<dbReference type="InterPro" id="IPR044814">
    <property type="entry name" value="Terpene_cyclase_plant_C1"/>
</dbReference>
<dbReference type="InterPro" id="IPR001906">
    <property type="entry name" value="Terpene_synth_N"/>
</dbReference>
<dbReference type="InterPro" id="IPR036965">
    <property type="entry name" value="Terpene_synth_N_sf"/>
</dbReference>
<dbReference type="InterPro" id="IPR050148">
    <property type="entry name" value="Terpene_synthase-like"/>
</dbReference>
<dbReference type="InterPro" id="IPR005630">
    <property type="entry name" value="Terpene_synthase_metal-bd"/>
</dbReference>
<dbReference type="InterPro" id="IPR008930">
    <property type="entry name" value="Terpenoid_cyclase/PrenylTrfase"/>
</dbReference>
<dbReference type="PANTHER" id="PTHR31225">
    <property type="entry name" value="OS04G0344100 PROTEIN-RELATED"/>
    <property type="match status" value="1"/>
</dbReference>
<dbReference type="PANTHER" id="PTHR31225:SF9">
    <property type="entry name" value="TERPENE SYNTHASE 10"/>
    <property type="match status" value="1"/>
</dbReference>
<dbReference type="Pfam" id="PF01397">
    <property type="entry name" value="Terpene_synth"/>
    <property type="match status" value="1"/>
</dbReference>
<dbReference type="Pfam" id="PF03936">
    <property type="entry name" value="Terpene_synth_C"/>
    <property type="match status" value="1"/>
</dbReference>
<dbReference type="SFLD" id="SFLDS00005">
    <property type="entry name" value="Isoprenoid_Synthase_Type_I"/>
    <property type="match status" value="1"/>
</dbReference>
<dbReference type="SFLD" id="SFLDG01019">
    <property type="entry name" value="Terpene_Cyclase_Like_1_C_Termi"/>
    <property type="match status" value="1"/>
</dbReference>
<dbReference type="SUPFAM" id="SSF48239">
    <property type="entry name" value="Terpenoid cyclases/Protein prenyltransferases"/>
    <property type="match status" value="1"/>
</dbReference>
<dbReference type="SUPFAM" id="SSF48576">
    <property type="entry name" value="Terpenoid synthases"/>
    <property type="match status" value="1"/>
</dbReference>
<reference key="1">
    <citation type="journal article" date="2017" name="PLoS ONE">
        <title>Terpene synthases from Cannabis sativa.</title>
        <authorList>
            <person name="Booth J.K."/>
            <person name="Page J.E."/>
            <person name="Bohlmann J."/>
        </authorList>
    </citation>
    <scope>NUCLEOTIDE SEQUENCE [MRNA]</scope>
    <scope>FUNCTION</scope>
    <scope>CATALYTIC ACTIVITY</scope>
    <scope>PATHWAY</scope>
    <scope>TISSUE SPECIFICITY</scope>
    <source>
        <strain>cv. Finola</strain>
    </source>
</reference>
<reference key="2">
    <citation type="submission" date="2020-03" db="EMBL/GenBank/DDBJ databases">
        <title>Sequence and annotation of 42 cannabis genomes reveals extensive copy number variation in cannabinoid synthesis and pathogen resistance genes.</title>
        <authorList>
            <person name="Mckernan K.J."/>
            <person name="Helbert Y."/>
            <person name="Kane L.T."/>
            <person name="Ebling H."/>
            <person name="Zhang L."/>
            <person name="Liu B."/>
            <person name="Eaton Z."/>
            <person name="Mclaughlin S."/>
            <person name="Kingan S."/>
            <person name="Baybayan P."/>
            <person name="Concepcion G."/>
            <person name="Jordan M."/>
            <person name="Riva A."/>
            <person name="Barbazuk W."/>
            <person name="Harkins T."/>
        </authorList>
    </citation>
    <scope>NUCLEOTIDE SEQUENCE [LARGE SCALE GENOMIC DNA]</scope>
    <source>
        <strain>cv. Jamaican Lion 4</strain>
        <tissue>Leaf</tissue>
    </source>
</reference>
<name>TS5FN_CANSA</name>
<sequence length="573" mass="67232">MSLSGLISTTTFKEQPAIVRRSGNYKPPLWDAHFIQSLQVIYTEESYGKRINELKEDVRRILEKEAENPLVKLEQINDLSRLGISYHFEDQIKAILNLTYNNNNALWKKDNLYATALHFKLLRQYGFNPVSSEIFNAFKDEKKEFKESLSKDVKGMVCLYEASFYSFRGEPILDEARDFTTKHLKQYLMMTRQGQNVDHDDDNDLMVKLVEHALELPVHWRMKRLEARWFIDMYAEMSHHHHMNSTFLQLAKLDFNVVQSTYQEDLKHVVRWWKTTSLGERLPFARDRIVEIFLWSVGLKFEPQFRYCRKMLTKIGQLVTTMDDIFDVYGTLDELSLFQHALGRWDINTIDQLPDYMKIFFLATYNVVNEMAYDVLKQNGILIIKYLKKTWTDLCKCYMLEANWYHSGYTPSLEEYIKNGWISIAEPLILVNLYCLITNPIKEDDIDCLLQYPTFIRISGIIARLVDDLGTSSDELKRGDNPKSIQCYMKENGICDEKNGREHIRNLISETWKEMNEARVGESPFSQAFIETAIDFVRTAMMIYQKEQDGVGTNIDHYTKDGIISLFFTSIPI</sequence>
<keyword id="KW-0456">Lyase</keyword>
<keyword id="KW-0460">Magnesium</keyword>
<keyword id="KW-0479">Metal-binding</keyword>
<keyword id="KW-1185">Reference proteome</keyword>